<dbReference type="EMBL" id="AE005176">
    <property type="protein sequence ID" value="AAK04765.1"/>
    <property type="molecule type" value="Genomic_DNA"/>
</dbReference>
<dbReference type="PIR" id="C86708">
    <property type="entry name" value="C86708"/>
</dbReference>
<dbReference type="RefSeq" id="NP_266823.1">
    <property type="nucleotide sequence ID" value="NC_002662.1"/>
</dbReference>
<dbReference type="RefSeq" id="WP_003129585.1">
    <property type="nucleotide sequence ID" value="NC_002662.1"/>
</dbReference>
<dbReference type="SMR" id="P0A487"/>
<dbReference type="PaxDb" id="272623-L0427"/>
<dbReference type="EnsemblBacteria" id="AAK04765">
    <property type="protein sequence ID" value="AAK04765"/>
    <property type="gene ID" value="L0427"/>
</dbReference>
<dbReference type="GeneID" id="89632767"/>
<dbReference type="KEGG" id="lla:L0427"/>
<dbReference type="PATRIC" id="fig|272623.7.peg.714"/>
<dbReference type="eggNOG" id="COG0267">
    <property type="taxonomic scope" value="Bacteria"/>
</dbReference>
<dbReference type="HOGENOM" id="CLU_190949_0_2_9"/>
<dbReference type="OrthoDB" id="197660at2"/>
<dbReference type="Proteomes" id="UP000002196">
    <property type="component" value="Chromosome"/>
</dbReference>
<dbReference type="GO" id="GO:0005737">
    <property type="term" value="C:cytoplasm"/>
    <property type="evidence" value="ECO:0007669"/>
    <property type="project" value="UniProtKB-ARBA"/>
</dbReference>
<dbReference type="GO" id="GO:1990904">
    <property type="term" value="C:ribonucleoprotein complex"/>
    <property type="evidence" value="ECO:0007669"/>
    <property type="project" value="UniProtKB-KW"/>
</dbReference>
<dbReference type="GO" id="GO:0005840">
    <property type="term" value="C:ribosome"/>
    <property type="evidence" value="ECO:0007669"/>
    <property type="project" value="UniProtKB-KW"/>
</dbReference>
<dbReference type="GO" id="GO:0003735">
    <property type="term" value="F:structural constituent of ribosome"/>
    <property type="evidence" value="ECO:0007669"/>
    <property type="project" value="InterPro"/>
</dbReference>
<dbReference type="GO" id="GO:0006412">
    <property type="term" value="P:translation"/>
    <property type="evidence" value="ECO:0007669"/>
    <property type="project" value="UniProtKB-UniRule"/>
</dbReference>
<dbReference type="Gene3D" id="2.20.28.120">
    <property type="entry name" value="Ribosomal protein L33"/>
    <property type="match status" value="1"/>
</dbReference>
<dbReference type="HAMAP" id="MF_00294">
    <property type="entry name" value="Ribosomal_bL33"/>
    <property type="match status" value="1"/>
</dbReference>
<dbReference type="InterPro" id="IPR001705">
    <property type="entry name" value="Ribosomal_bL33"/>
</dbReference>
<dbReference type="InterPro" id="IPR018264">
    <property type="entry name" value="Ribosomal_bL33_CS"/>
</dbReference>
<dbReference type="InterPro" id="IPR038584">
    <property type="entry name" value="Ribosomal_bL33_sf"/>
</dbReference>
<dbReference type="InterPro" id="IPR011332">
    <property type="entry name" value="Ribosomal_zn-bd"/>
</dbReference>
<dbReference type="NCBIfam" id="NF001764">
    <property type="entry name" value="PRK00504.1"/>
    <property type="match status" value="1"/>
</dbReference>
<dbReference type="NCBIfam" id="NF001860">
    <property type="entry name" value="PRK00595.1"/>
    <property type="match status" value="1"/>
</dbReference>
<dbReference type="NCBIfam" id="TIGR01023">
    <property type="entry name" value="rpmG_bact"/>
    <property type="match status" value="1"/>
</dbReference>
<dbReference type="PANTHER" id="PTHR43168">
    <property type="entry name" value="50S RIBOSOMAL PROTEIN L33, CHLOROPLASTIC"/>
    <property type="match status" value="1"/>
</dbReference>
<dbReference type="PANTHER" id="PTHR43168:SF6">
    <property type="entry name" value="LARGE RIBOSOMAL SUBUNIT PROTEIN BL33A"/>
    <property type="match status" value="1"/>
</dbReference>
<dbReference type="Pfam" id="PF00471">
    <property type="entry name" value="Ribosomal_L33"/>
    <property type="match status" value="1"/>
</dbReference>
<dbReference type="SUPFAM" id="SSF57829">
    <property type="entry name" value="Zn-binding ribosomal proteins"/>
    <property type="match status" value="1"/>
</dbReference>
<dbReference type="PROSITE" id="PS00582">
    <property type="entry name" value="RIBOSOMAL_L33"/>
    <property type="match status" value="1"/>
</dbReference>
<sequence>MRVKITLICSSCGNKNYISSKNKATHPEKVETMKFCPKERIVTLHREG</sequence>
<comment type="similarity">
    <text evidence="2">Belongs to the bacterial ribosomal protein bL33 family.</text>
</comment>
<feature type="chain" id="PRO_0000170170" description="Large ribosomal subunit protein bL33A">
    <location>
        <begin position="1"/>
        <end position="48"/>
    </location>
</feature>
<name>RL331_LACLA</name>
<evidence type="ECO:0000255" key="1">
    <source>
        <dbReference type="HAMAP-Rule" id="MF_00294"/>
    </source>
</evidence>
<evidence type="ECO:0000305" key="2"/>
<gene>
    <name type="primary">rpmG1</name>
    <name type="synonym">rpmG</name>
    <name type="synonym">rpmGA</name>
    <name type="ordered locus">LL0667</name>
    <name type="ORF">L0427</name>
</gene>
<keyword id="KW-1185">Reference proteome</keyword>
<keyword id="KW-0687">Ribonucleoprotein</keyword>
<keyword id="KW-0689">Ribosomal protein</keyword>
<protein>
    <recommendedName>
        <fullName evidence="1">Large ribosomal subunit protein bL33A</fullName>
    </recommendedName>
    <alternativeName>
        <fullName>50S ribosomal protein L33 1</fullName>
    </alternativeName>
</protein>
<proteinExistence type="inferred from homology"/>
<accession>P0A487</accession>
<accession>P27167</accession>
<reference key="1">
    <citation type="journal article" date="2001" name="Genome Res.">
        <title>The complete genome sequence of the lactic acid bacterium Lactococcus lactis ssp. lactis IL1403.</title>
        <authorList>
            <person name="Bolotin A."/>
            <person name="Wincker P."/>
            <person name="Mauger S."/>
            <person name="Jaillon O."/>
            <person name="Malarme K."/>
            <person name="Weissenbach J."/>
            <person name="Ehrlich S.D."/>
            <person name="Sorokin A."/>
        </authorList>
    </citation>
    <scope>NUCLEOTIDE SEQUENCE [LARGE SCALE GENOMIC DNA]</scope>
    <source>
        <strain>IL1403</strain>
    </source>
</reference>
<organism>
    <name type="scientific">Lactococcus lactis subsp. lactis (strain IL1403)</name>
    <name type="common">Streptococcus lactis</name>
    <dbReference type="NCBI Taxonomy" id="272623"/>
    <lineage>
        <taxon>Bacteria</taxon>
        <taxon>Bacillati</taxon>
        <taxon>Bacillota</taxon>
        <taxon>Bacilli</taxon>
        <taxon>Lactobacillales</taxon>
        <taxon>Streptococcaceae</taxon>
        <taxon>Lactococcus</taxon>
    </lineage>
</organism>